<sequence length="92" mass="10470">MPRSLKKGPFIDLHLLKKVEKAVESGDKKPVKTWSRRSMIIPTMINLTIAVHNGRQHVPVFVTEDMIGHKLGEFAPTRTYRGHAADKKAKKR</sequence>
<reference key="1">
    <citation type="journal article" date="2005" name="Proc. Natl. Acad. Sci. U.S.A.">
        <title>Complete genome sequence of Vibrio fischeri: a symbiotic bacterium with pathogenic congeners.</title>
        <authorList>
            <person name="Ruby E.G."/>
            <person name="Urbanowski M."/>
            <person name="Campbell J."/>
            <person name="Dunn A."/>
            <person name="Faini M."/>
            <person name="Gunsalus R."/>
            <person name="Lostroh P."/>
            <person name="Lupp C."/>
            <person name="McCann J."/>
            <person name="Millikan D."/>
            <person name="Schaefer A."/>
            <person name="Stabb E."/>
            <person name="Stevens A."/>
            <person name="Visick K."/>
            <person name="Whistler C."/>
            <person name="Greenberg E.P."/>
        </authorList>
    </citation>
    <scope>NUCLEOTIDE SEQUENCE [LARGE SCALE GENOMIC DNA]</scope>
    <source>
        <strain>ATCC 700601 / ES114</strain>
    </source>
</reference>
<gene>
    <name evidence="1" type="primary">rpsS</name>
    <name type="ordered locus">VF_0240</name>
</gene>
<organism>
    <name type="scientific">Aliivibrio fischeri (strain ATCC 700601 / ES114)</name>
    <name type="common">Vibrio fischeri</name>
    <dbReference type="NCBI Taxonomy" id="312309"/>
    <lineage>
        <taxon>Bacteria</taxon>
        <taxon>Pseudomonadati</taxon>
        <taxon>Pseudomonadota</taxon>
        <taxon>Gammaproteobacteria</taxon>
        <taxon>Vibrionales</taxon>
        <taxon>Vibrionaceae</taxon>
        <taxon>Aliivibrio</taxon>
    </lineage>
</organism>
<name>RS19_ALIF1</name>
<feature type="chain" id="PRO_0000265462" description="Small ribosomal subunit protein uS19">
    <location>
        <begin position="1"/>
        <end position="92"/>
    </location>
</feature>
<evidence type="ECO:0000255" key="1">
    <source>
        <dbReference type="HAMAP-Rule" id="MF_00531"/>
    </source>
</evidence>
<evidence type="ECO:0000305" key="2"/>
<comment type="function">
    <text evidence="1">Protein S19 forms a complex with S13 that binds strongly to the 16S ribosomal RNA.</text>
</comment>
<comment type="similarity">
    <text evidence="1">Belongs to the universal ribosomal protein uS19 family.</text>
</comment>
<protein>
    <recommendedName>
        <fullName evidence="1">Small ribosomal subunit protein uS19</fullName>
    </recommendedName>
    <alternativeName>
        <fullName evidence="2">30S ribosomal protein S19</fullName>
    </alternativeName>
</protein>
<accession>Q5E8B1</accession>
<proteinExistence type="inferred from homology"/>
<dbReference type="EMBL" id="CP000020">
    <property type="protein sequence ID" value="AAW84735.1"/>
    <property type="molecule type" value="Genomic_DNA"/>
</dbReference>
<dbReference type="RefSeq" id="WP_005417232.1">
    <property type="nucleotide sequence ID" value="NZ_CAWLES010000001.1"/>
</dbReference>
<dbReference type="RefSeq" id="YP_203623.1">
    <property type="nucleotide sequence ID" value="NC_006840.2"/>
</dbReference>
<dbReference type="SMR" id="Q5E8B1"/>
<dbReference type="STRING" id="312309.VF_0240"/>
<dbReference type="EnsemblBacteria" id="AAW84735">
    <property type="protein sequence ID" value="AAW84735"/>
    <property type="gene ID" value="VF_0240"/>
</dbReference>
<dbReference type="GeneID" id="54162862"/>
<dbReference type="KEGG" id="vfi:VF_0240"/>
<dbReference type="PATRIC" id="fig|312309.11.peg.236"/>
<dbReference type="eggNOG" id="COG0185">
    <property type="taxonomic scope" value="Bacteria"/>
</dbReference>
<dbReference type="HOGENOM" id="CLU_144911_0_1_6"/>
<dbReference type="OrthoDB" id="9797833at2"/>
<dbReference type="Proteomes" id="UP000000537">
    <property type="component" value="Chromosome I"/>
</dbReference>
<dbReference type="GO" id="GO:0005737">
    <property type="term" value="C:cytoplasm"/>
    <property type="evidence" value="ECO:0007669"/>
    <property type="project" value="UniProtKB-ARBA"/>
</dbReference>
<dbReference type="GO" id="GO:0015935">
    <property type="term" value="C:small ribosomal subunit"/>
    <property type="evidence" value="ECO:0007669"/>
    <property type="project" value="InterPro"/>
</dbReference>
<dbReference type="GO" id="GO:0019843">
    <property type="term" value="F:rRNA binding"/>
    <property type="evidence" value="ECO:0007669"/>
    <property type="project" value="UniProtKB-UniRule"/>
</dbReference>
<dbReference type="GO" id="GO:0003735">
    <property type="term" value="F:structural constituent of ribosome"/>
    <property type="evidence" value="ECO:0007669"/>
    <property type="project" value="InterPro"/>
</dbReference>
<dbReference type="GO" id="GO:0000028">
    <property type="term" value="P:ribosomal small subunit assembly"/>
    <property type="evidence" value="ECO:0007669"/>
    <property type="project" value="TreeGrafter"/>
</dbReference>
<dbReference type="GO" id="GO:0006412">
    <property type="term" value="P:translation"/>
    <property type="evidence" value="ECO:0007669"/>
    <property type="project" value="UniProtKB-UniRule"/>
</dbReference>
<dbReference type="FunFam" id="3.30.860.10:FF:000001">
    <property type="entry name" value="30S ribosomal protein S19"/>
    <property type="match status" value="1"/>
</dbReference>
<dbReference type="Gene3D" id="3.30.860.10">
    <property type="entry name" value="30s Ribosomal Protein S19, Chain A"/>
    <property type="match status" value="1"/>
</dbReference>
<dbReference type="HAMAP" id="MF_00531">
    <property type="entry name" value="Ribosomal_uS19"/>
    <property type="match status" value="1"/>
</dbReference>
<dbReference type="InterPro" id="IPR002222">
    <property type="entry name" value="Ribosomal_uS19"/>
</dbReference>
<dbReference type="InterPro" id="IPR005732">
    <property type="entry name" value="Ribosomal_uS19_bac-type"/>
</dbReference>
<dbReference type="InterPro" id="IPR020934">
    <property type="entry name" value="Ribosomal_uS19_CS"/>
</dbReference>
<dbReference type="InterPro" id="IPR023575">
    <property type="entry name" value="Ribosomal_uS19_SF"/>
</dbReference>
<dbReference type="NCBIfam" id="TIGR01050">
    <property type="entry name" value="rpsS_bact"/>
    <property type="match status" value="1"/>
</dbReference>
<dbReference type="PANTHER" id="PTHR11880">
    <property type="entry name" value="RIBOSOMAL PROTEIN S19P FAMILY MEMBER"/>
    <property type="match status" value="1"/>
</dbReference>
<dbReference type="PANTHER" id="PTHR11880:SF8">
    <property type="entry name" value="SMALL RIBOSOMAL SUBUNIT PROTEIN US19M"/>
    <property type="match status" value="1"/>
</dbReference>
<dbReference type="Pfam" id="PF00203">
    <property type="entry name" value="Ribosomal_S19"/>
    <property type="match status" value="1"/>
</dbReference>
<dbReference type="PIRSF" id="PIRSF002144">
    <property type="entry name" value="Ribosomal_S19"/>
    <property type="match status" value="1"/>
</dbReference>
<dbReference type="PRINTS" id="PR00975">
    <property type="entry name" value="RIBOSOMALS19"/>
</dbReference>
<dbReference type="SUPFAM" id="SSF54570">
    <property type="entry name" value="Ribosomal protein S19"/>
    <property type="match status" value="1"/>
</dbReference>
<dbReference type="PROSITE" id="PS00323">
    <property type="entry name" value="RIBOSOMAL_S19"/>
    <property type="match status" value="1"/>
</dbReference>
<keyword id="KW-1185">Reference proteome</keyword>
<keyword id="KW-0687">Ribonucleoprotein</keyword>
<keyword id="KW-0689">Ribosomal protein</keyword>
<keyword id="KW-0694">RNA-binding</keyword>
<keyword id="KW-0699">rRNA-binding</keyword>